<dbReference type="EC" id="6.1.1.20" evidence="1"/>
<dbReference type="EMBL" id="AE015925">
    <property type="protein sequence ID" value="AAP04899.1"/>
    <property type="molecule type" value="Genomic_DNA"/>
</dbReference>
<dbReference type="RefSeq" id="WP_011006120.1">
    <property type="nucleotide sequence ID" value="NC_003361.3"/>
</dbReference>
<dbReference type="SMR" id="Q824J8"/>
<dbReference type="STRING" id="227941.CCA_00147"/>
<dbReference type="KEGG" id="cca:CCA_00147"/>
<dbReference type="eggNOG" id="COG0072">
    <property type="taxonomic scope" value="Bacteria"/>
</dbReference>
<dbReference type="eggNOG" id="COG0073">
    <property type="taxonomic scope" value="Bacteria"/>
</dbReference>
<dbReference type="HOGENOM" id="CLU_016891_0_0_0"/>
<dbReference type="OrthoDB" id="9805455at2"/>
<dbReference type="Proteomes" id="UP000002193">
    <property type="component" value="Chromosome"/>
</dbReference>
<dbReference type="GO" id="GO:0009328">
    <property type="term" value="C:phenylalanine-tRNA ligase complex"/>
    <property type="evidence" value="ECO:0007669"/>
    <property type="project" value="TreeGrafter"/>
</dbReference>
<dbReference type="GO" id="GO:0005524">
    <property type="term" value="F:ATP binding"/>
    <property type="evidence" value="ECO:0007669"/>
    <property type="project" value="UniProtKB-UniRule"/>
</dbReference>
<dbReference type="GO" id="GO:0000287">
    <property type="term" value="F:magnesium ion binding"/>
    <property type="evidence" value="ECO:0007669"/>
    <property type="project" value="UniProtKB-UniRule"/>
</dbReference>
<dbReference type="GO" id="GO:0004826">
    <property type="term" value="F:phenylalanine-tRNA ligase activity"/>
    <property type="evidence" value="ECO:0007669"/>
    <property type="project" value="UniProtKB-UniRule"/>
</dbReference>
<dbReference type="GO" id="GO:0000049">
    <property type="term" value="F:tRNA binding"/>
    <property type="evidence" value="ECO:0007669"/>
    <property type="project" value="UniProtKB-KW"/>
</dbReference>
<dbReference type="GO" id="GO:0006432">
    <property type="term" value="P:phenylalanyl-tRNA aminoacylation"/>
    <property type="evidence" value="ECO:0007669"/>
    <property type="project" value="UniProtKB-UniRule"/>
</dbReference>
<dbReference type="CDD" id="cd00769">
    <property type="entry name" value="PheRS_beta_core"/>
    <property type="match status" value="1"/>
</dbReference>
<dbReference type="CDD" id="cd02796">
    <property type="entry name" value="tRNA_bind_bactPheRS"/>
    <property type="match status" value="1"/>
</dbReference>
<dbReference type="Gene3D" id="3.30.56.10">
    <property type="match status" value="2"/>
</dbReference>
<dbReference type="Gene3D" id="3.30.930.10">
    <property type="entry name" value="Bira Bifunctional Protein, Domain 2"/>
    <property type="match status" value="1"/>
</dbReference>
<dbReference type="Gene3D" id="3.30.70.380">
    <property type="entry name" value="Ferrodoxin-fold anticodon-binding domain"/>
    <property type="match status" value="1"/>
</dbReference>
<dbReference type="Gene3D" id="2.40.50.140">
    <property type="entry name" value="Nucleic acid-binding proteins"/>
    <property type="match status" value="1"/>
</dbReference>
<dbReference type="Gene3D" id="3.50.40.10">
    <property type="entry name" value="Phenylalanyl-trna Synthetase, Chain B, domain 3"/>
    <property type="match status" value="1"/>
</dbReference>
<dbReference type="HAMAP" id="MF_00283">
    <property type="entry name" value="Phe_tRNA_synth_beta1"/>
    <property type="match status" value="1"/>
</dbReference>
<dbReference type="InterPro" id="IPR045864">
    <property type="entry name" value="aa-tRNA-synth_II/BPL/LPL"/>
</dbReference>
<dbReference type="InterPro" id="IPR005146">
    <property type="entry name" value="B3/B4_tRNA-bd"/>
</dbReference>
<dbReference type="InterPro" id="IPR009061">
    <property type="entry name" value="DNA-bd_dom_put_sf"/>
</dbReference>
<dbReference type="InterPro" id="IPR005121">
    <property type="entry name" value="Fdx_antiC-bd"/>
</dbReference>
<dbReference type="InterPro" id="IPR036690">
    <property type="entry name" value="Fdx_antiC-bd_sf"/>
</dbReference>
<dbReference type="InterPro" id="IPR012340">
    <property type="entry name" value="NA-bd_OB-fold"/>
</dbReference>
<dbReference type="InterPro" id="IPR045060">
    <property type="entry name" value="Phe-tRNA-ligase_IIc_bsu"/>
</dbReference>
<dbReference type="InterPro" id="IPR004532">
    <property type="entry name" value="Phe-tRNA-ligase_IIc_bsu_bact"/>
</dbReference>
<dbReference type="InterPro" id="IPR020825">
    <property type="entry name" value="Phe-tRNA_synthase-like_B3/B4"/>
</dbReference>
<dbReference type="InterPro" id="IPR041616">
    <property type="entry name" value="PheRS_beta_core"/>
</dbReference>
<dbReference type="InterPro" id="IPR002547">
    <property type="entry name" value="tRNA-bd_dom"/>
</dbReference>
<dbReference type="InterPro" id="IPR033714">
    <property type="entry name" value="tRNA_bind_bactPheRS"/>
</dbReference>
<dbReference type="InterPro" id="IPR005147">
    <property type="entry name" value="tRNA_synthase_B5-dom"/>
</dbReference>
<dbReference type="NCBIfam" id="TIGR00472">
    <property type="entry name" value="pheT_bact"/>
    <property type="match status" value="1"/>
</dbReference>
<dbReference type="PANTHER" id="PTHR10947:SF0">
    <property type="entry name" value="PHENYLALANINE--TRNA LIGASE BETA SUBUNIT"/>
    <property type="match status" value="1"/>
</dbReference>
<dbReference type="PANTHER" id="PTHR10947">
    <property type="entry name" value="PHENYLALANYL-TRNA SYNTHETASE BETA CHAIN AND LEUCINE-RICH REPEAT-CONTAINING PROTEIN 47"/>
    <property type="match status" value="1"/>
</dbReference>
<dbReference type="Pfam" id="PF03483">
    <property type="entry name" value="B3_4"/>
    <property type="match status" value="1"/>
</dbReference>
<dbReference type="Pfam" id="PF03484">
    <property type="entry name" value="B5"/>
    <property type="match status" value="1"/>
</dbReference>
<dbReference type="Pfam" id="PF03147">
    <property type="entry name" value="FDX-ACB"/>
    <property type="match status" value="1"/>
</dbReference>
<dbReference type="Pfam" id="PF01588">
    <property type="entry name" value="tRNA_bind"/>
    <property type="match status" value="1"/>
</dbReference>
<dbReference type="Pfam" id="PF17759">
    <property type="entry name" value="tRNA_synthFbeta"/>
    <property type="match status" value="1"/>
</dbReference>
<dbReference type="SMART" id="SM00873">
    <property type="entry name" value="B3_4"/>
    <property type="match status" value="1"/>
</dbReference>
<dbReference type="SMART" id="SM00874">
    <property type="entry name" value="B5"/>
    <property type="match status" value="1"/>
</dbReference>
<dbReference type="SMART" id="SM00896">
    <property type="entry name" value="FDX-ACB"/>
    <property type="match status" value="1"/>
</dbReference>
<dbReference type="SUPFAM" id="SSF54991">
    <property type="entry name" value="Anticodon-binding domain of PheRS"/>
    <property type="match status" value="1"/>
</dbReference>
<dbReference type="SUPFAM" id="SSF55681">
    <property type="entry name" value="Class II aaRS and biotin synthetases"/>
    <property type="match status" value="1"/>
</dbReference>
<dbReference type="SUPFAM" id="SSF50249">
    <property type="entry name" value="Nucleic acid-binding proteins"/>
    <property type="match status" value="1"/>
</dbReference>
<dbReference type="SUPFAM" id="SSF56037">
    <property type="entry name" value="PheT/TilS domain"/>
    <property type="match status" value="1"/>
</dbReference>
<dbReference type="SUPFAM" id="SSF46955">
    <property type="entry name" value="Putative DNA-binding domain"/>
    <property type="match status" value="1"/>
</dbReference>
<dbReference type="PROSITE" id="PS51483">
    <property type="entry name" value="B5"/>
    <property type="match status" value="1"/>
</dbReference>
<dbReference type="PROSITE" id="PS51447">
    <property type="entry name" value="FDX_ACB"/>
    <property type="match status" value="1"/>
</dbReference>
<dbReference type="PROSITE" id="PS50886">
    <property type="entry name" value="TRBD"/>
    <property type="match status" value="1"/>
</dbReference>
<accession>Q824J8</accession>
<sequence>MRVSLSSLQRFFSSPLPIKQIIEACDHIGIETEVETLLTCSFSSIITAKVLKTVPHPNADKLVVATLFDGQQEYQIVCGAPNCRPGIIIPLALPGAKLHDHEGNAYTIKKSKLRGVESQGMCCGADELGFAHLQTTERGLFEFPENTPLGESACALLADTFIECSLTPNLGHCASLLGLAREITYVTNVDLVLPPEFVCTPLETITKETSGQDQHLCPIFCCVKISGVSAQASPQELQNALGGLKQKSINSIVDITNYIMLSLGQPLHVYDANAVDIDSLHAQKAQKDEPLKLLNNEEVLVPQGTAIICDKDHTVGLAGVMGSLDSSFNDATTEIILEAAYFLPSAIRASQTHVPIHSEAAYRFTRGIDPNNVLPALYAAIHYIQKLFPNAKVSPIQVLGSTPQASTLSFRTELVGKILGMPLHASQVRDQLHSLGFNISSEENSILSVNIPSYRHDIQEEIDLVEEVCRTQPWKVENKKAPAIYSPMYSLKRRVVDFLANSGLQQFFTCDLLDTETAALNREEADCISLQGSKQATVLRDSLLPGLLKSTATNLNRQAPYVHAFEVGTTYTKKSSKYQETQSLGIILSGQAEEISWISHERPLSFYSIKGWIERLFQYLHVSSQAYAIQPYEHANFHPYQQAEIHLHKHVLGRFGTLHPQLCKKAQIKHSVFFAELSLDSLLHTQKKALHLYKPYPIYPSSFRDITLTVHESVPADSLRKKLLSFHSKWLESVSIISIYQNKNPTTQNKNVSLRLVFQDKERTLSNQEIEEEHERLLAMLNAQINDTKGTID</sequence>
<keyword id="KW-0030">Aminoacyl-tRNA synthetase</keyword>
<keyword id="KW-0067">ATP-binding</keyword>
<keyword id="KW-0963">Cytoplasm</keyword>
<keyword id="KW-0436">Ligase</keyword>
<keyword id="KW-0460">Magnesium</keyword>
<keyword id="KW-0479">Metal-binding</keyword>
<keyword id="KW-0547">Nucleotide-binding</keyword>
<keyword id="KW-0648">Protein biosynthesis</keyword>
<keyword id="KW-0694">RNA-binding</keyword>
<keyword id="KW-0820">tRNA-binding</keyword>
<comment type="catalytic activity">
    <reaction evidence="1">
        <text>tRNA(Phe) + L-phenylalanine + ATP = L-phenylalanyl-tRNA(Phe) + AMP + diphosphate + H(+)</text>
        <dbReference type="Rhea" id="RHEA:19413"/>
        <dbReference type="Rhea" id="RHEA-COMP:9668"/>
        <dbReference type="Rhea" id="RHEA-COMP:9699"/>
        <dbReference type="ChEBI" id="CHEBI:15378"/>
        <dbReference type="ChEBI" id="CHEBI:30616"/>
        <dbReference type="ChEBI" id="CHEBI:33019"/>
        <dbReference type="ChEBI" id="CHEBI:58095"/>
        <dbReference type="ChEBI" id="CHEBI:78442"/>
        <dbReference type="ChEBI" id="CHEBI:78531"/>
        <dbReference type="ChEBI" id="CHEBI:456215"/>
        <dbReference type="EC" id="6.1.1.20"/>
    </reaction>
</comment>
<comment type="cofactor">
    <cofactor evidence="1">
        <name>Mg(2+)</name>
        <dbReference type="ChEBI" id="CHEBI:18420"/>
    </cofactor>
    <text evidence="1">Binds 2 magnesium ions per tetramer.</text>
</comment>
<comment type="subunit">
    <text evidence="1">Tetramer of two alpha and two beta subunits.</text>
</comment>
<comment type="subcellular location">
    <subcellularLocation>
        <location evidence="1">Cytoplasm</location>
    </subcellularLocation>
</comment>
<comment type="similarity">
    <text evidence="1">Belongs to the phenylalanyl-tRNA synthetase beta subunit family. Type 1 subfamily.</text>
</comment>
<feature type="chain" id="PRO_0000126864" description="Phenylalanine--tRNA ligase beta subunit">
    <location>
        <begin position="1"/>
        <end position="793"/>
    </location>
</feature>
<feature type="domain" description="tRNA-binding" evidence="1">
    <location>
        <begin position="39"/>
        <end position="154"/>
    </location>
</feature>
<feature type="domain" description="B5" evidence="1">
    <location>
        <begin position="403"/>
        <end position="481"/>
    </location>
</feature>
<feature type="domain" description="FDX-ACB" evidence="1">
    <location>
        <begin position="697"/>
        <end position="793"/>
    </location>
</feature>
<feature type="binding site" evidence="1">
    <location>
        <position position="457"/>
    </location>
    <ligand>
        <name>Mg(2+)</name>
        <dbReference type="ChEBI" id="CHEBI:18420"/>
        <note>shared with alpha subunit</note>
    </ligand>
</feature>
<feature type="binding site" evidence="1">
    <location>
        <position position="463"/>
    </location>
    <ligand>
        <name>Mg(2+)</name>
        <dbReference type="ChEBI" id="CHEBI:18420"/>
        <note>shared with alpha subunit</note>
    </ligand>
</feature>
<feature type="binding site" evidence="1">
    <location>
        <position position="466"/>
    </location>
    <ligand>
        <name>Mg(2+)</name>
        <dbReference type="ChEBI" id="CHEBI:18420"/>
        <note>shared with alpha subunit</note>
    </ligand>
</feature>
<feature type="binding site" evidence="1">
    <location>
        <position position="467"/>
    </location>
    <ligand>
        <name>Mg(2+)</name>
        <dbReference type="ChEBI" id="CHEBI:18420"/>
        <note>shared with alpha subunit</note>
    </ligand>
</feature>
<proteinExistence type="inferred from homology"/>
<organism>
    <name type="scientific">Chlamydia caviae (strain ATCC VR-813 / DSM 19441 / 03DC25 / GPIC)</name>
    <name type="common">Chlamydophila caviae</name>
    <dbReference type="NCBI Taxonomy" id="227941"/>
    <lineage>
        <taxon>Bacteria</taxon>
        <taxon>Pseudomonadati</taxon>
        <taxon>Chlamydiota</taxon>
        <taxon>Chlamydiia</taxon>
        <taxon>Chlamydiales</taxon>
        <taxon>Chlamydiaceae</taxon>
        <taxon>Chlamydia/Chlamydophila group</taxon>
        <taxon>Chlamydia</taxon>
    </lineage>
</organism>
<gene>
    <name evidence="1" type="primary">pheT</name>
    <name type="ordered locus">CCA_00147</name>
</gene>
<evidence type="ECO:0000255" key="1">
    <source>
        <dbReference type="HAMAP-Rule" id="MF_00283"/>
    </source>
</evidence>
<protein>
    <recommendedName>
        <fullName evidence="1">Phenylalanine--tRNA ligase beta subunit</fullName>
        <ecNumber evidence="1">6.1.1.20</ecNumber>
    </recommendedName>
    <alternativeName>
        <fullName evidence="1">Phenylalanyl-tRNA synthetase beta subunit</fullName>
        <shortName evidence="1">PheRS</shortName>
    </alternativeName>
</protein>
<reference key="1">
    <citation type="journal article" date="2003" name="Nucleic Acids Res.">
        <title>Genome sequence of Chlamydophila caviae (Chlamydia psittaci GPIC): examining the role of niche-specific genes in the evolution of the Chlamydiaceae.</title>
        <authorList>
            <person name="Read T.D."/>
            <person name="Myers G.S.A."/>
            <person name="Brunham R.C."/>
            <person name="Nelson W.C."/>
            <person name="Paulsen I.T."/>
            <person name="Heidelberg J.F."/>
            <person name="Holtzapple E.K."/>
            <person name="Khouri H.M."/>
            <person name="Federova N.B."/>
            <person name="Carty H.A."/>
            <person name="Umayam L.A."/>
            <person name="Haft D.H."/>
            <person name="Peterson J.D."/>
            <person name="Beanan M.J."/>
            <person name="White O."/>
            <person name="Salzberg S.L."/>
            <person name="Hsia R.-C."/>
            <person name="McClarty G."/>
            <person name="Rank R.G."/>
            <person name="Bavoil P.M."/>
            <person name="Fraser C.M."/>
        </authorList>
    </citation>
    <scope>NUCLEOTIDE SEQUENCE [LARGE SCALE GENOMIC DNA]</scope>
    <source>
        <strain>ATCC VR-813 / DSM 19441 / 03DC25 / GPIC</strain>
    </source>
</reference>
<name>SYFB_CHLCV</name>